<name>PNCB_YERP3</name>
<proteinExistence type="inferred from homology"/>
<gene>
    <name evidence="1" type="primary">pncB</name>
    <name type="ordered locus">YpsIP31758_2557</name>
</gene>
<comment type="function">
    <text evidence="1">Catalyzes the synthesis of beta-nicotinate D-ribonucleotide from nicotinate and 5-phospho-D-ribose 1-phosphate at the expense of ATP.</text>
</comment>
<comment type="catalytic activity">
    <reaction evidence="1">
        <text>nicotinate + 5-phospho-alpha-D-ribose 1-diphosphate + ATP + H2O = nicotinate beta-D-ribonucleotide + ADP + phosphate + diphosphate</text>
        <dbReference type="Rhea" id="RHEA:36163"/>
        <dbReference type="ChEBI" id="CHEBI:15377"/>
        <dbReference type="ChEBI" id="CHEBI:30616"/>
        <dbReference type="ChEBI" id="CHEBI:32544"/>
        <dbReference type="ChEBI" id="CHEBI:33019"/>
        <dbReference type="ChEBI" id="CHEBI:43474"/>
        <dbReference type="ChEBI" id="CHEBI:57502"/>
        <dbReference type="ChEBI" id="CHEBI:58017"/>
        <dbReference type="ChEBI" id="CHEBI:456216"/>
        <dbReference type="EC" id="6.3.4.21"/>
    </reaction>
</comment>
<comment type="pathway">
    <text evidence="1">Cofactor biosynthesis; NAD(+) biosynthesis; nicotinate D-ribonucleotide from nicotinate: step 1/1.</text>
</comment>
<comment type="PTM">
    <text evidence="1">Transiently phosphorylated on a His residue during the reaction cycle. Phosphorylation strongly increases the affinity for substrates and increases the rate of nicotinate D-ribonucleotide production. Dephosphorylation regenerates the low-affinity form of the enzyme, leading to product release.</text>
</comment>
<comment type="similarity">
    <text evidence="1">Belongs to the NAPRTase family.</text>
</comment>
<reference key="1">
    <citation type="journal article" date="2007" name="PLoS Genet.">
        <title>The complete genome sequence of Yersinia pseudotuberculosis IP31758, the causative agent of Far East scarlet-like fever.</title>
        <authorList>
            <person name="Eppinger M."/>
            <person name="Rosovitz M.J."/>
            <person name="Fricke W.F."/>
            <person name="Rasko D.A."/>
            <person name="Kokorina G."/>
            <person name="Fayolle C."/>
            <person name="Lindler L.E."/>
            <person name="Carniel E."/>
            <person name="Ravel J."/>
        </authorList>
    </citation>
    <scope>NUCLEOTIDE SEQUENCE [LARGE SCALE GENOMIC DNA]</scope>
    <source>
        <strain>IP 31758</strain>
    </source>
</reference>
<feature type="chain" id="PRO_1000061170" description="Nicotinate phosphoribosyltransferase">
    <location>
        <begin position="1"/>
        <end position="401"/>
    </location>
</feature>
<feature type="modified residue" description="Phosphohistidine; by autocatalysis" evidence="1">
    <location>
        <position position="221"/>
    </location>
</feature>
<dbReference type="EC" id="6.3.4.21" evidence="1"/>
<dbReference type="EMBL" id="CP000720">
    <property type="protein sequence ID" value="ABS45898.1"/>
    <property type="molecule type" value="Genomic_DNA"/>
</dbReference>
<dbReference type="RefSeq" id="WP_002228013.1">
    <property type="nucleotide sequence ID" value="NC_009708.1"/>
</dbReference>
<dbReference type="SMR" id="A7FJU4"/>
<dbReference type="GeneID" id="57977209"/>
<dbReference type="KEGG" id="ypi:YpsIP31758_2557"/>
<dbReference type="HOGENOM" id="CLU_030991_1_0_6"/>
<dbReference type="UniPathway" id="UPA00253">
    <property type="reaction ID" value="UER00457"/>
</dbReference>
<dbReference type="Proteomes" id="UP000002412">
    <property type="component" value="Chromosome"/>
</dbReference>
<dbReference type="GO" id="GO:0005829">
    <property type="term" value="C:cytosol"/>
    <property type="evidence" value="ECO:0007669"/>
    <property type="project" value="TreeGrafter"/>
</dbReference>
<dbReference type="GO" id="GO:0004516">
    <property type="term" value="F:nicotinate phosphoribosyltransferase activity"/>
    <property type="evidence" value="ECO:0007669"/>
    <property type="project" value="UniProtKB-UniRule"/>
</dbReference>
<dbReference type="GO" id="GO:0034355">
    <property type="term" value="P:NAD biosynthetic process via the salvage pathway"/>
    <property type="evidence" value="ECO:0007669"/>
    <property type="project" value="TreeGrafter"/>
</dbReference>
<dbReference type="CDD" id="cd01401">
    <property type="entry name" value="PncB_like"/>
    <property type="match status" value="1"/>
</dbReference>
<dbReference type="FunFam" id="3.20.140.10:FF:000001">
    <property type="entry name" value="Nicotinate phosphoribosyltransferase"/>
    <property type="match status" value="1"/>
</dbReference>
<dbReference type="Gene3D" id="3.20.140.10">
    <property type="entry name" value="nicotinate phosphoribosyltransferase"/>
    <property type="match status" value="1"/>
</dbReference>
<dbReference type="HAMAP" id="MF_00570">
    <property type="entry name" value="NAPRTase"/>
    <property type="match status" value="1"/>
</dbReference>
<dbReference type="InterPro" id="IPR041525">
    <property type="entry name" value="N/Namide_PRibTrfase"/>
</dbReference>
<dbReference type="InterPro" id="IPR040727">
    <property type="entry name" value="NAPRTase_N"/>
</dbReference>
<dbReference type="InterPro" id="IPR006406">
    <property type="entry name" value="Nic_PRibTrfase"/>
</dbReference>
<dbReference type="InterPro" id="IPR007229">
    <property type="entry name" value="Nic_PRibTrfase-Fam"/>
</dbReference>
<dbReference type="InterPro" id="IPR036068">
    <property type="entry name" value="Nicotinate_pribotase-like_C"/>
</dbReference>
<dbReference type="NCBIfam" id="TIGR01514">
    <property type="entry name" value="NAPRTase"/>
    <property type="match status" value="1"/>
</dbReference>
<dbReference type="NCBIfam" id="NF003704">
    <property type="entry name" value="PRK05321.1"/>
    <property type="match status" value="1"/>
</dbReference>
<dbReference type="PANTHER" id="PTHR11098">
    <property type="entry name" value="NICOTINATE PHOSPHORIBOSYLTRANSFERASE"/>
    <property type="match status" value="1"/>
</dbReference>
<dbReference type="PANTHER" id="PTHR11098:SF1">
    <property type="entry name" value="NICOTINATE PHOSPHORIBOSYLTRANSFERASE"/>
    <property type="match status" value="1"/>
</dbReference>
<dbReference type="Pfam" id="PF04095">
    <property type="entry name" value="NAPRTase"/>
    <property type="match status" value="1"/>
</dbReference>
<dbReference type="Pfam" id="PF17767">
    <property type="entry name" value="NAPRTase_N"/>
    <property type="match status" value="1"/>
</dbReference>
<dbReference type="PIRSF" id="PIRSF000484">
    <property type="entry name" value="NAPRT"/>
    <property type="match status" value="1"/>
</dbReference>
<dbReference type="SUPFAM" id="SSF51690">
    <property type="entry name" value="Nicotinate/Quinolinate PRTase C-terminal domain-like"/>
    <property type="match status" value="1"/>
</dbReference>
<dbReference type="SUPFAM" id="SSF54675">
    <property type="entry name" value="Nicotinate/Quinolinate PRTase N-terminal domain-like"/>
    <property type="match status" value="1"/>
</dbReference>
<organism>
    <name type="scientific">Yersinia pseudotuberculosis serotype O:1b (strain IP 31758)</name>
    <dbReference type="NCBI Taxonomy" id="349747"/>
    <lineage>
        <taxon>Bacteria</taxon>
        <taxon>Pseudomonadati</taxon>
        <taxon>Pseudomonadota</taxon>
        <taxon>Gammaproteobacteria</taxon>
        <taxon>Enterobacterales</taxon>
        <taxon>Yersiniaceae</taxon>
        <taxon>Yersinia</taxon>
    </lineage>
</organism>
<sequence length="401" mass="46022">MTQDASPILTSLLDTDAYKLHMQQAVFHHYRHITVAAEFRCRSDELLGVYADEIRHQVTLMGQLALTSDEFIYLSSLPFFQDDYLHWLRDFRFKPEQVSVAVHDGKLDIRIAGLWCEVIMWEVPLLAVISEIVHRRRSTQVTTDQAVQQLRTKLEQFNALSADIDITHFKLMDFGTRRRFSREIQHTVVSTLKDEFPYLVGTSNYDLARTLALAPVGTQAHEWFQAHQQISPTLANSQRVALQVWLDEYPNQLGIALTDCITMDAFLRDFDLAFANRYQGLRHDSGDPIEWGEKAIAHYEKLGIDPMKKVLVFSDNLDLEKALFLYRHFYQRIKLVFGIGTRLTCDIPDVKPLNIVIKLVECNDKPVAKLSDSPGKTICQDPAFVDQLRKAFALPLVKKAS</sequence>
<accession>A7FJU4</accession>
<evidence type="ECO:0000255" key="1">
    <source>
        <dbReference type="HAMAP-Rule" id="MF_00570"/>
    </source>
</evidence>
<keyword id="KW-0436">Ligase</keyword>
<keyword id="KW-0597">Phosphoprotein</keyword>
<keyword id="KW-0662">Pyridine nucleotide biosynthesis</keyword>
<protein>
    <recommendedName>
        <fullName evidence="1">Nicotinate phosphoribosyltransferase</fullName>
        <shortName evidence="1">NAPRTase</shortName>
        <ecNumber evidence="1">6.3.4.21</ecNumber>
    </recommendedName>
</protein>